<reference key="1">
    <citation type="submission" date="2000-05" db="EMBL/GenBank/DDBJ databases">
        <title>Rice cDNA encoding plastid ribosomal protein L11.</title>
        <authorList>
            <person name="Tozawa Y."/>
            <person name="Satsu H."/>
            <person name="Ito Y."/>
            <person name="Ochi K."/>
        </authorList>
    </citation>
    <scope>NUCLEOTIDE SEQUENCE [MRNA]</scope>
    <source>
        <strain>cv. Nipponbare</strain>
    </source>
</reference>
<reference key="2">
    <citation type="journal article" date="2005" name="Genome Res.">
        <title>Sequence, annotation, and analysis of synteny between rice chromosome 3 and diverged grass species.</title>
        <authorList>
            <consortium name="The rice chromosome 3 sequencing consortium"/>
            <person name="Buell C.R."/>
            <person name="Yuan Q."/>
            <person name="Ouyang S."/>
            <person name="Liu J."/>
            <person name="Zhu W."/>
            <person name="Wang A."/>
            <person name="Maiti R."/>
            <person name="Haas B."/>
            <person name="Wortman J."/>
            <person name="Pertea M."/>
            <person name="Jones K.M."/>
            <person name="Kim M."/>
            <person name="Overton L."/>
            <person name="Tsitrin T."/>
            <person name="Fadrosh D."/>
            <person name="Bera J."/>
            <person name="Weaver B."/>
            <person name="Jin S."/>
            <person name="Johri S."/>
            <person name="Reardon M."/>
            <person name="Webb K."/>
            <person name="Hill J."/>
            <person name="Moffat K."/>
            <person name="Tallon L."/>
            <person name="Van Aken S."/>
            <person name="Lewis M."/>
            <person name="Utterback T."/>
            <person name="Feldblyum T."/>
            <person name="Zismann V."/>
            <person name="Iobst S."/>
            <person name="Hsiao J."/>
            <person name="de Vazeille A.R."/>
            <person name="Salzberg S.L."/>
            <person name="White O."/>
            <person name="Fraser C.M."/>
            <person name="Yu Y."/>
            <person name="Kim H."/>
            <person name="Rambo T."/>
            <person name="Currie J."/>
            <person name="Collura K."/>
            <person name="Kernodle-Thompson S."/>
            <person name="Wei F."/>
            <person name="Kudrna K."/>
            <person name="Ammiraju J.S.S."/>
            <person name="Luo M."/>
            <person name="Goicoechea J.L."/>
            <person name="Wing R.A."/>
            <person name="Henry D."/>
            <person name="Oates R."/>
            <person name="Palmer M."/>
            <person name="Pries G."/>
            <person name="Saski C."/>
            <person name="Simmons J."/>
            <person name="Soderlund C."/>
            <person name="Nelson W."/>
            <person name="de la Bastide M."/>
            <person name="Spiegel L."/>
            <person name="Nascimento L."/>
            <person name="Huang E."/>
            <person name="Preston R."/>
            <person name="Zutavern T."/>
            <person name="Palmer L."/>
            <person name="O'Shaughnessy A."/>
            <person name="Dike S."/>
            <person name="McCombie W.R."/>
            <person name="Minx P."/>
            <person name="Cordum H."/>
            <person name="Wilson R."/>
            <person name="Jin W."/>
            <person name="Lee H.R."/>
            <person name="Jiang J."/>
            <person name="Jackson S."/>
        </authorList>
    </citation>
    <scope>NUCLEOTIDE SEQUENCE [LARGE SCALE GENOMIC DNA]</scope>
    <source>
        <strain>cv. Nipponbare</strain>
    </source>
</reference>
<reference key="3">
    <citation type="journal article" date="2005" name="Nature">
        <title>The map-based sequence of the rice genome.</title>
        <authorList>
            <consortium name="International rice genome sequencing project (IRGSP)"/>
        </authorList>
    </citation>
    <scope>NUCLEOTIDE SEQUENCE [LARGE SCALE GENOMIC DNA]</scope>
    <source>
        <strain>cv. Nipponbare</strain>
    </source>
</reference>
<reference key="4">
    <citation type="journal article" date="2008" name="Nucleic Acids Res.">
        <title>The rice annotation project database (RAP-DB): 2008 update.</title>
        <authorList>
            <consortium name="The rice annotation project (RAP)"/>
        </authorList>
    </citation>
    <scope>GENOME REANNOTATION</scope>
    <source>
        <strain>cv. Nipponbare</strain>
    </source>
</reference>
<reference key="5">
    <citation type="journal article" date="2013" name="Rice">
        <title>Improvement of the Oryza sativa Nipponbare reference genome using next generation sequence and optical map data.</title>
        <authorList>
            <person name="Kawahara Y."/>
            <person name="de la Bastide M."/>
            <person name="Hamilton J.P."/>
            <person name="Kanamori H."/>
            <person name="McCombie W.R."/>
            <person name="Ouyang S."/>
            <person name="Schwartz D.C."/>
            <person name="Tanaka T."/>
            <person name="Wu J."/>
            <person name="Zhou S."/>
            <person name="Childs K.L."/>
            <person name="Davidson R.M."/>
            <person name="Lin H."/>
            <person name="Quesada-Ocampo L."/>
            <person name="Vaillancourt B."/>
            <person name="Sakai H."/>
            <person name="Lee S.S."/>
            <person name="Kim J."/>
            <person name="Numa H."/>
            <person name="Itoh T."/>
            <person name="Buell C.R."/>
            <person name="Matsumoto T."/>
        </authorList>
    </citation>
    <scope>GENOME REANNOTATION</scope>
    <source>
        <strain>cv. Nipponbare</strain>
    </source>
</reference>
<reference key="6">
    <citation type="journal article" date="2005" name="PLoS Biol.">
        <title>The genomes of Oryza sativa: a history of duplications.</title>
        <authorList>
            <person name="Yu J."/>
            <person name="Wang J."/>
            <person name="Lin W."/>
            <person name="Li S."/>
            <person name="Li H."/>
            <person name="Zhou J."/>
            <person name="Ni P."/>
            <person name="Dong W."/>
            <person name="Hu S."/>
            <person name="Zeng C."/>
            <person name="Zhang J."/>
            <person name="Zhang Y."/>
            <person name="Li R."/>
            <person name="Xu Z."/>
            <person name="Li S."/>
            <person name="Li X."/>
            <person name="Zheng H."/>
            <person name="Cong L."/>
            <person name="Lin L."/>
            <person name="Yin J."/>
            <person name="Geng J."/>
            <person name="Li G."/>
            <person name="Shi J."/>
            <person name="Liu J."/>
            <person name="Lv H."/>
            <person name="Li J."/>
            <person name="Wang J."/>
            <person name="Deng Y."/>
            <person name="Ran L."/>
            <person name="Shi X."/>
            <person name="Wang X."/>
            <person name="Wu Q."/>
            <person name="Li C."/>
            <person name="Ren X."/>
            <person name="Wang J."/>
            <person name="Wang X."/>
            <person name="Li D."/>
            <person name="Liu D."/>
            <person name="Zhang X."/>
            <person name="Ji Z."/>
            <person name="Zhao W."/>
            <person name="Sun Y."/>
            <person name="Zhang Z."/>
            <person name="Bao J."/>
            <person name="Han Y."/>
            <person name="Dong L."/>
            <person name="Ji J."/>
            <person name="Chen P."/>
            <person name="Wu S."/>
            <person name="Liu J."/>
            <person name="Xiao Y."/>
            <person name="Bu D."/>
            <person name="Tan J."/>
            <person name="Yang L."/>
            <person name="Ye C."/>
            <person name="Zhang J."/>
            <person name="Xu J."/>
            <person name="Zhou Y."/>
            <person name="Yu Y."/>
            <person name="Zhang B."/>
            <person name="Zhuang S."/>
            <person name="Wei H."/>
            <person name="Liu B."/>
            <person name="Lei M."/>
            <person name="Yu H."/>
            <person name="Li Y."/>
            <person name="Xu H."/>
            <person name="Wei S."/>
            <person name="He X."/>
            <person name="Fang L."/>
            <person name="Zhang Z."/>
            <person name="Zhang Y."/>
            <person name="Huang X."/>
            <person name="Su Z."/>
            <person name="Tong W."/>
            <person name="Li J."/>
            <person name="Tong Z."/>
            <person name="Li S."/>
            <person name="Ye J."/>
            <person name="Wang L."/>
            <person name="Fang L."/>
            <person name="Lei T."/>
            <person name="Chen C.-S."/>
            <person name="Chen H.-C."/>
            <person name="Xu Z."/>
            <person name="Li H."/>
            <person name="Huang H."/>
            <person name="Zhang F."/>
            <person name="Xu H."/>
            <person name="Li N."/>
            <person name="Zhao C."/>
            <person name="Li S."/>
            <person name="Dong L."/>
            <person name="Huang Y."/>
            <person name="Li L."/>
            <person name="Xi Y."/>
            <person name="Qi Q."/>
            <person name="Li W."/>
            <person name="Zhang B."/>
            <person name="Hu W."/>
            <person name="Zhang Y."/>
            <person name="Tian X."/>
            <person name="Jiao Y."/>
            <person name="Liang X."/>
            <person name="Jin J."/>
            <person name="Gao L."/>
            <person name="Zheng W."/>
            <person name="Hao B."/>
            <person name="Liu S.-M."/>
            <person name="Wang W."/>
            <person name="Yuan L."/>
            <person name="Cao M."/>
            <person name="McDermott J."/>
            <person name="Samudrala R."/>
            <person name="Wang J."/>
            <person name="Wong G.K.-S."/>
            <person name="Yang H."/>
        </authorList>
    </citation>
    <scope>NUCLEOTIDE SEQUENCE [LARGE SCALE GENOMIC DNA]</scope>
    <source>
        <strain>cv. Nipponbare</strain>
    </source>
</reference>
<dbReference type="EC" id="2.7.6.5"/>
<dbReference type="EMBL" id="AB042935">
    <property type="protein sequence ID" value="BAB21484.1"/>
    <property type="molecule type" value="mRNA"/>
</dbReference>
<dbReference type="EMBL" id="DP000009">
    <property type="protein sequence ID" value="ABF95859.1"/>
    <property type="molecule type" value="Genomic_DNA"/>
</dbReference>
<dbReference type="EMBL" id="AP008209">
    <property type="protein sequence ID" value="BAF11981.1"/>
    <property type="molecule type" value="Genomic_DNA"/>
</dbReference>
<dbReference type="EMBL" id="AP014959">
    <property type="protein sequence ID" value="BAS84122.1"/>
    <property type="molecule type" value="Genomic_DNA"/>
</dbReference>
<dbReference type="EMBL" id="CM000140">
    <property type="protein sequence ID" value="EEE59034.1"/>
    <property type="molecule type" value="Genomic_DNA"/>
</dbReference>
<dbReference type="RefSeq" id="XP_015632055.1">
    <property type="nucleotide sequence ID" value="XM_015776569.1"/>
</dbReference>
<dbReference type="SMR" id="Q9AYT5"/>
<dbReference type="FunCoup" id="Q9AYT5">
    <property type="interactions" value="463"/>
</dbReference>
<dbReference type="STRING" id="39947.Q9AYT5"/>
<dbReference type="PaxDb" id="39947-Q9AYT5"/>
<dbReference type="EnsemblPlants" id="Os03t0340900-01">
    <property type="protein sequence ID" value="Os03t0340900-01"/>
    <property type="gene ID" value="Os03g0340900"/>
</dbReference>
<dbReference type="Gramene" id="Os03t0340900-01">
    <property type="protein sequence ID" value="Os03t0340900-01"/>
    <property type="gene ID" value="Os03g0340900"/>
</dbReference>
<dbReference type="KEGG" id="dosa:Os03g0340900"/>
<dbReference type="eggNOG" id="KOG1157">
    <property type="taxonomic scope" value="Eukaryota"/>
</dbReference>
<dbReference type="HOGENOM" id="CLU_012300_5_0_1"/>
<dbReference type="InParanoid" id="Q9AYT5"/>
<dbReference type="OMA" id="LQANIPM"/>
<dbReference type="OrthoDB" id="430679at2759"/>
<dbReference type="Proteomes" id="UP000000763">
    <property type="component" value="Chromosome 3"/>
</dbReference>
<dbReference type="Proteomes" id="UP000007752">
    <property type="component" value="Chromosome 3"/>
</dbReference>
<dbReference type="Proteomes" id="UP000059680">
    <property type="component" value="Chromosome 3"/>
</dbReference>
<dbReference type="GO" id="GO:0009507">
    <property type="term" value="C:chloroplast"/>
    <property type="evidence" value="ECO:0007669"/>
    <property type="project" value="UniProtKB-SubCell"/>
</dbReference>
<dbReference type="GO" id="GO:0005524">
    <property type="term" value="F:ATP binding"/>
    <property type="evidence" value="ECO:0007669"/>
    <property type="project" value="UniProtKB-KW"/>
</dbReference>
<dbReference type="GO" id="GO:0005525">
    <property type="term" value="F:GTP binding"/>
    <property type="evidence" value="ECO:0007669"/>
    <property type="project" value="UniProtKB-KW"/>
</dbReference>
<dbReference type="GO" id="GO:0008728">
    <property type="term" value="F:GTP diphosphokinase activity"/>
    <property type="evidence" value="ECO:0007669"/>
    <property type="project" value="UniProtKB-EC"/>
</dbReference>
<dbReference type="GO" id="GO:0008893">
    <property type="term" value="F:guanosine-3',5'-bis(diphosphate) 3'-diphosphatase activity"/>
    <property type="evidence" value="ECO:0007669"/>
    <property type="project" value="EnsemblPlants"/>
</dbReference>
<dbReference type="GO" id="GO:0016301">
    <property type="term" value="F:kinase activity"/>
    <property type="evidence" value="ECO:0007669"/>
    <property type="project" value="UniProtKB-KW"/>
</dbReference>
<dbReference type="GO" id="GO:0015969">
    <property type="term" value="P:guanosine tetraphosphate metabolic process"/>
    <property type="evidence" value="ECO:0007669"/>
    <property type="project" value="InterPro"/>
</dbReference>
<dbReference type="GO" id="GO:0010150">
    <property type="term" value="P:leaf senescence"/>
    <property type="evidence" value="ECO:0007669"/>
    <property type="project" value="EnsemblPlants"/>
</dbReference>
<dbReference type="GO" id="GO:0015979">
    <property type="term" value="P:photosynthesis"/>
    <property type="evidence" value="ECO:0007669"/>
    <property type="project" value="EnsemblPlants"/>
</dbReference>
<dbReference type="GO" id="GO:0009611">
    <property type="term" value="P:response to wounding"/>
    <property type="evidence" value="ECO:0007669"/>
    <property type="project" value="EnsemblPlants"/>
</dbReference>
<dbReference type="CDD" id="cd02116">
    <property type="entry name" value="ACT"/>
    <property type="match status" value="1"/>
</dbReference>
<dbReference type="CDD" id="cd00077">
    <property type="entry name" value="HDc"/>
    <property type="match status" value="1"/>
</dbReference>
<dbReference type="CDD" id="cd05399">
    <property type="entry name" value="NT_Rel-Spo_like"/>
    <property type="match status" value="1"/>
</dbReference>
<dbReference type="CDD" id="cd01668">
    <property type="entry name" value="TGS_RSH"/>
    <property type="match status" value="1"/>
</dbReference>
<dbReference type="FunFam" id="3.10.20.30:FF:000002">
    <property type="entry name" value="GTP pyrophosphokinase (RelA/SpoT)"/>
    <property type="match status" value="1"/>
</dbReference>
<dbReference type="FunFam" id="1.10.3210.10:FF:000001">
    <property type="entry name" value="GTP pyrophosphokinase RelA"/>
    <property type="match status" value="1"/>
</dbReference>
<dbReference type="Gene3D" id="3.10.20.30">
    <property type="match status" value="1"/>
</dbReference>
<dbReference type="Gene3D" id="3.30.460.10">
    <property type="entry name" value="Beta Polymerase, domain 2"/>
    <property type="match status" value="1"/>
</dbReference>
<dbReference type="Gene3D" id="1.10.3210.10">
    <property type="entry name" value="Hypothetical protein af1432"/>
    <property type="match status" value="1"/>
</dbReference>
<dbReference type="InterPro" id="IPR045865">
    <property type="entry name" value="ACT-like_dom_sf"/>
</dbReference>
<dbReference type="InterPro" id="IPR012675">
    <property type="entry name" value="Beta-grasp_dom_sf"/>
</dbReference>
<dbReference type="InterPro" id="IPR003607">
    <property type="entry name" value="HD/PDEase_dom"/>
</dbReference>
<dbReference type="InterPro" id="IPR006674">
    <property type="entry name" value="HD_domain"/>
</dbReference>
<dbReference type="InterPro" id="IPR043519">
    <property type="entry name" value="NT_sf"/>
</dbReference>
<dbReference type="InterPro" id="IPR007685">
    <property type="entry name" value="RelA_SpoT"/>
</dbReference>
<dbReference type="InterPro" id="IPR004095">
    <property type="entry name" value="TGS"/>
</dbReference>
<dbReference type="InterPro" id="IPR012676">
    <property type="entry name" value="TGS-like"/>
</dbReference>
<dbReference type="InterPro" id="IPR033655">
    <property type="entry name" value="TGS_RelA/SpoT"/>
</dbReference>
<dbReference type="PANTHER" id="PTHR43061">
    <property type="entry name" value="GTP DIPHOSPHOKINASE RSH1, CHLOROPLASTIC-RELATED"/>
    <property type="match status" value="1"/>
</dbReference>
<dbReference type="PANTHER" id="PTHR43061:SF1">
    <property type="entry name" value="GTP DIPHOSPHOKINASE RSH1, CHLOROPLASTIC-RELATED"/>
    <property type="match status" value="1"/>
</dbReference>
<dbReference type="Pfam" id="PF13328">
    <property type="entry name" value="HD_4"/>
    <property type="match status" value="1"/>
</dbReference>
<dbReference type="Pfam" id="PF04607">
    <property type="entry name" value="RelA_SpoT"/>
    <property type="match status" value="1"/>
</dbReference>
<dbReference type="Pfam" id="PF02824">
    <property type="entry name" value="TGS"/>
    <property type="match status" value="1"/>
</dbReference>
<dbReference type="SMART" id="SM00471">
    <property type="entry name" value="HDc"/>
    <property type="match status" value="1"/>
</dbReference>
<dbReference type="SMART" id="SM00954">
    <property type="entry name" value="RelA_SpoT"/>
    <property type="match status" value="1"/>
</dbReference>
<dbReference type="SUPFAM" id="SSF55021">
    <property type="entry name" value="ACT-like"/>
    <property type="match status" value="1"/>
</dbReference>
<dbReference type="SUPFAM" id="SSF109604">
    <property type="entry name" value="HD-domain/PDEase-like"/>
    <property type="match status" value="1"/>
</dbReference>
<dbReference type="SUPFAM" id="SSF81301">
    <property type="entry name" value="Nucleotidyltransferase"/>
    <property type="match status" value="1"/>
</dbReference>
<dbReference type="SUPFAM" id="SSF81271">
    <property type="entry name" value="TGS-like"/>
    <property type="match status" value="1"/>
</dbReference>
<dbReference type="PROSITE" id="PS51831">
    <property type="entry name" value="HD"/>
    <property type="match status" value="1"/>
</dbReference>
<dbReference type="PROSITE" id="PS51880">
    <property type="entry name" value="TGS"/>
    <property type="match status" value="1"/>
</dbReference>
<gene>
    <name type="primary">RSH1</name>
    <name type="ordered locus">Os03g0340900</name>
    <name type="ordered locus">LOC_Os03g22160</name>
    <name type="ORF">OsJ_10786</name>
</gene>
<feature type="transit peptide" description="Chloroplast" evidence="2">
    <location>
        <begin position="1"/>
        <end position="52"/>
    </location>
</feature>
<feature type="chain" id="PRO_0000429846" description="Putative GTP diphosphokinase RSH1, chloroplastic">
    <location>
        <begin position="53"/>
        <end position="892"/>
    </location>
</feature>
<feature type="domain" description="HD" evidence="4">
    <location>
        <begin position="184"/>
        <end position="291"/>
    </location>
</feature>
<feature type="domain" description="TGS" evidence="5">
    <location>
        <begin position="574"/>
        <end position="637"/>
    </location>
</feature>
<feature type="domain" description="ACT" evidence="3">
    <location>
        <begin position="809"/>
        <end position="880"/>
    </location>
</feature>
<keyword id="KW-0067">ATP-binding</keyword>
<keyword id="KW-0150">Chloroplast</keyword>
<keyword id="KW-0342">GTP-binding</keyword>
<keyword id="KW-0418">Kinase</keyword>
<keyword id="KW-0547">Nucleotide-binding</keyword>
<keyword id="KW-0934">Plastid</keyword>
<keyword id="KW-1185">Reference proteome</keyword>
<keyword id="KW-0346">Stress response</keyword>
<keyword id="KW-0808">Transferase</keyword>
<keyword id="KW-0809">Transit peptide</keyword>
<organism>
    <name type="scientific">Oryza sativa subsp. japonica</name>
    <name type="common">Rice</name>
    <dbReference type="NCBI Taxonomy" id="39947"/>
    <lineage>
        <taxon>Eukaryota</taxon>
        <taxon>Viridiplantae</taxon>
        <taxon>Streptophyta</taxon>
        <taxon>Embryophyta</taxon>
        <taxon>Tracheophyta</taxon>
        <taxon>Spermatophyta</taxon>
        <taxon>Magnoliopsida</taxon>
        <taxon>Liliopsida</taxon>
        <taxon>Poales</taxon>
        <taxon>Poaceae</taxon>
        <taxon>BOP clade</taxon>
        <taxon>Oryzoideae</taxon>
        <taxon>Oryzeae</taxon>
        <taxon>Oryzinae</taxon>
        <taxon>Oryza</taxon>
        <taxon>Oryza sativa</taxon>
    </lineage>
</organism>
<protein>
    <recommendedName>
        <fullName>Putative GTP diphosphokinase RSH1, chloroplastic</fullName>
        <ecNumber>2.7.6.5</ecNumber>
    </recommendedName>
    <alternativeName>
        <fullName>RelA/SpoT homolog 1</fullName>
        <shortName>Os-RelA1</shortName>
        <shortName>OsRSH1</shortName>
    </alternativeName>
    <alternativeName>
        <fullName>ppGpp synthetase RSH1</fullName>
    </alternativeName>
</protein>
<proteinExistence type="evidence at transcript level"/>
<comment type="function">
    <text evidence="1">May be involved in a rapid plant ppGpp (guanosine 3'-diphosphate 5'-diphosphate)-mediated response to pathogens and other stresses.</text>
</comment>
<comment type="catalytic activity">
    <reaction>
        <text>GTP + ATP = guanosine 3'-diphosphate 5'-triphosphate + AMP</text>
        <dbReference type="Rhea" id="RHEA:22088"/>
        <dbReference type="ChEBI" id="CHEBI:30616"/>
        <dbReference type="ChEBI" id="CHEBI:37565"/>
        <dbReference type="ChEBI" id="CHEBI:142410"/>
        <dbReference type="ChEBI" id="CHEBI:456215"/>
        <dbReference type="EC" id="2.7.6.5"/>
    </reaction>
</comment>
<comment type="subcellular location">
    <subcellularLocation>
        <location evidence="6">Plastid</location>
        <location evidence="6">Chloroplast</location>
    </subcellularLocation>
</comment>
<comment type="similarity">
    <text evidence="6">Belongs to the RelA/SpoT family.</text>
</comment>
<evidence type="ECO:0000250" key="1"/>
<evidence type="ECO:0000255" key="2"/>
<evidence type="ECO:0000255" key="3">
    <source>
        <dbReference type="PROSITE-ProRule" id="PRU01007"/>
    </source>
</evidence>
<evidence type="ECO:0000255" key="4">
    <source>
        <dbReference type="PROSITE-ProRule" id="PRU01175"/>
    </source>
</evidence>
<evidence type="ECO:0000255" key="5">
    <source>
        <dbReference type="PROSITE-ProRule" id="PRU01228"/>
    </source>
</evidence>
<evidence type="ECO:0000305" key="6"/>
<sequence length="892" mass="99143">MQPPTGAVSGSSSSSLECVSSCRTSWRGGGRPYECSVLSCAWNAPRALTGALASTTAQCSSCSHAEAGAGWRRRGQSQRSNNSLLHITWAEGINRGKFGYGSSAHSFPTGNFFKSWSTSVDPTWRVFCYSSSESFNHISPETLWEDLKPAISYLQPEELNFVHDALKLAYEAHNGQKRRSGEPFIIHPVEVARILGEHELDWESIAAGLLHDTVEDTDMVTFERIENEFGVTVRRIVEGETKVSKLGKLQCKNEGNSKQDVKAEDLRQMFLAMTEEVRVIIVKLADRLHNMRTLTHMPQHKQYAIAMETLQVFAPLAKLLGMYRIKSELEYLSFMYMNPGDFAELKKRVEDLYKAHEQELEEANQILGEKIAEDQFLDLVSVETQVRSVCKELYSIYKTALKSKSSINEINQVAQLRIIIKPKSCNGVGPLCTAQQICYHVLGLVHGIWTPIPQAVKDYIATPKPNGYQSLHTTVIPFLNESMFHLEVQIRTEDMDLIAERGIAAHYSGRGVVSGPVRPGISSGRNSNGKVICLNNTGFALRIGWLNAIREWQEEFVGNMSSREFVDTITRDLLGSRVFVFTPKGEIKNLPKGATVVDYAYLIHTEIGNKMVAAKVNGNLVSPIHVLANAEVVEIIIYDKLSAKYAFQRHQQWLQHAKTRSARHKIMKFLREQAALSAAEITADAVNNFVADLEDESDYEQSIPSSENKDYTFNWQKILNSDKLSFGNKKSDCFLPVKNVSVPKVNGKHNKTVKELGIKINGSTFRGDSFTDFIHPGVSSSKEVLPSVDNWKAGKICAWHNTEGSSIQWLCIVCVDRKGMVAEVSSALTACGITICSCVAERDKRRGIGVMLFHFEGAYENVVSACSGVDMILGVLGWSVGCSCNPLGVLEC</sequence>
<name>RSH1_ORYSJ</name>
<accession>Q9AYT5</accession>
<accession>A0A0P0VX73</accession>